<accession>Q3AUR6</accession>
<protein>
    <recommendedName>
        <fullName evidence="1">Chorismate synthase</fullName>
        <shortName evidence="1">CS</shortName>
        <ecNumber evidence="1">4.2.3.5</ecNumber>
    </recommendedName>
    <alternativeName>
        <fullName evidence="1">5-enolpyruvylshikimate-3-phosphate phospholyase</fullName>
    </alternativeName>
</protein>
<evidence type="ECO:0000255" key="1">
    <source>
        <dbReference type="HAMAP-Rule" id="MF_00300"/>
    </source>
</evidence>
<organism>
    <name type="scientific">Synechococcus sp. (strain CC9902)</name>
    <dbReference type="NCBI Taxonomy" id="316279"/>
    <lineage>
        <taxon>Bacteria</taxon>
        <taxon>Bacillati</taxon>
        <taxon>Cyanobacteriota</taxon>
        <taxon>Cyanophyceae</taxon>
        <taxon>Synechococcales</taxon>
        <taxon>Synechococcaceae</taxon>
        <taxon>Synechococcus</taxon>
    </lineage>
</organism>
<keyword id="KW-0028">Amino-acid biosynthesis</keyword>
<keyword id="KW-0057">Aromatic amino acid biosynthesis</keyword>
<keyword id="KW-0274">FAD</keyword>
<keyword id="KW-0285">Flavoprotein</keyword>
<keyword id="KW-0288">FMN</keyword>
<keyword id="KW-0456">Lyase</keyword>
<keyword id="KW-0521">NADP</keyword>
<keyword id="KW-1185">Reference proteome</keyword>
<comment type="function">
    <text evidence="1">Catalyzes the anti-1,4-elimination of the C-3 phosphate and the C-6 proR hydrogen from 5-enolpyruvylshikimate-3-phosphate (EPSP) to yield chorismate, which is the branch point compound that serves as the starting substrate for the three terminal pathways of aromatic amino acid biosynthesis. This reaction introduces a second double bond into the aromatic ring system.</text>
</comment>
<comment type="catalytic activity">
    <reaction evidence="1">
        <text>5-O-(1-carboxyvinyl)-3-phosphoshikimate = chorismate + phosphate</text>
        <dbReference type="Rhea" id="RHEA:21020"/>
        <dbReference type="ChEBI" id="CHEBI:29748"/>
        <dbReference type="ChEBI" id="CHEBI:43474"/>
        <dbReference type="ChEBI" id="CHEBI:57701"/>
        <dbReference type="EC" id="4.2.3.5"/>
    </reaction>
</comment>
<comment type="cofactor">
    <cofactor evidence="1">
        <name>FMNH2</name>
        <dbReference type="ChEBI" id="CHEBI:57618"/>
    </cofactor>
    <text evidence="1">Reduced FMN (FMNH(2)).</text>
</comment>
<comment type="pathway">
    <text evidence="1">Metabolic intermediate biosynthesis; chorismate biosynthesis; chorismate from D-erythrose 4-phosphate and phosphoenolpyruvate: step 7/7.</text>
</comment>
<comment type="subunit">
    <text evidence="1">Homotetramer.</text>
</comment>
<comment type="similarity">
    <text evidence="1">Belongs to the chorismate synthase family.</text>
</comment>
<gene>
    <name evidence="1" type="primary">aroC</name>
    <name type="ordered locus">Syncc9902_2040</name>
</gene>
<sequence length="364" mass="38550">MGSSFGDLFRISTFGESHGGGVGVIVEGCPPRLELDLDEIQAELNRRKPGQSHITTPRKEADQVEILSGLLDGKTTLGTPIAMLVRNKDQRPGDYSDMAVAFRPSHADATYQSKYGIQARSGGGRASARETIGRVAAGAIAKQLLRKAAGTEILAWVKQIHTIEAHGIDPSTVSMNDIEANIVRCPEASVANQMIERIEAIGREGDSCGGVIECVVRQPAVGLGMPVFDKLEADLAKAVMSLPATKGFEIGSGFSGTLLKGSEHNDAFIPGDDGRLHTATNNSGGIQGGISNGEPIVIRVGFKPTATIRKEQQTIDSDGNATTLAAKGRHDPCVLPRAVPMVEAMVALTLADHLLRQQGQCSLW</sequence>
<dbReference type="EC" id="4.2.3.5" evidence="1"/>
<dbReference type="EMBL" id="CP000097">
    <property type="protein sequence ID" value="ABB26998.1"/>
    <property type="molecule type" value="Genomic_DNA"/>
</dbReference>
<dbReference type="RefSeq" id="WP_011360786.1">
    <property type="nucleotide sequence ID" value="NC_007513.1"/>
</dbReference>
<dbReference type="SMR" id="Q3AUR6"/>
<dbReference type="STRING" id="316279.Syncc9902_2040"/>
<dbReference type="KEGG" id="sye:Syncc9902_2040"/>
<dbReference type="eggNOG" id="COG0082">
    <property type="taxonomic scope" value="Bacteria"/>
</dbReference>
<dbReference type="HOGENOM" id="CLU_034547_0_1_3"/>
<dbReference type="OrthoDB" id="9771806at2"/>
<dbReference type="UniPathway" id="UPA00053">
    <property type="reaction ID" value="UER00090"/>
</dbReference>
<dbReference type="Proteomes" id="UP000002712">
    <property type="component" value="Chromosome"/>
</dbReference>
<dbReference type="GO" id="GO:0005829">
    <property type="term" value="C:cytosol"/>
    <property type="evidence" value="ECO:0007669"/>
    <property type="project" value="TreeGrafter"/>
</dbReference>
<dbReference type="GO" id="GO:0004107">
    <property type="term" value="F:chorismate synthase activity"/>
    <property type="evidence" value="ECO:0007669"/>
    <property type="project" value="UniProtKB-UniRule"/>
</dbReference>
<dbReference type="GO" id="GO:0010181">
    <property type="term" value="F:FMN binding"/>
    <property type="evidence" value="ECO:0007669"/>
    <property type="project" value="TreeGrafter"/>
</dbReference>
<dbReference type="GO" id="GO:0008652">
    <property type="term" value="P:amino acid biosynthetic process"/>
    <property type="evidence" value="ECO:0007669"/>
    <property type="project" value="UniProtKB-KW"/>
</dbReference>
<dbReference type="GO" id="GO:0009073">
    <property type="term" value="P:aromatic amino acid family biosynthetic process"/>
    <property type="evidence" value="ECO:0007669"/>
    <property type="project" value="UniProtKB-KW"/>
</dbReference>
<dbReference type="GO" id="GO:0009423">
    <property type="term" value="P:chorismate biosynthetic process"/>
    <property type="evidence" value="ECO:0007669"/>
    <property type="project" value="UniProtKB-UniRule"/>
</dbReference>
<dbReference type="CDD" id="cd07304">
    <property type="entry name" value="Chorismate_synthase"/>
    <property type="match status" value="1"/>
</dbReference>
<dbReference type="FunFam" id="3.60.150.10:FF:000003">
    <property type="entry name" value="Chorismate synthase"/>
    <property type="match status" value="1"/>
</dbReference>
<dbReference type="Gene3D" id="3.60.150.10">
    <property type="entry name" value="Chorismate synthase AroC"/>
    <property type="match status" value="1"/>
</dbReference>
<dbReference type="HAMAP" id="MF_00300">
    <property type="entry name" value="Chorismate_synth"/>
    <property type="match status" value="1"/>
</dbReference>
<dbReference type="InterPro" id="IPR000453">
    <property type="entry name" value="Chorismate_synth"/>
</dbReference>
<dbReference type="InterPro" id="IPR035904">
    <property type="entry name" value="Chorismate_synth_AroC_sf"/>
</dbReference>
<dbReference type="InterPro" id="IPR020541">
    <property type="entry name" value="Chorismate_synthase_CS"/>
</dbReference>
<dbReference type="NCBIfam" id="TIGR00033">
    <property type="entry name" value="aroC"/>
    <property type="match status" value="1"/>
</dbReference>
<dbReference type="NCBIfam" id="NF003793">
    <property type="entry name" value="PRK05382.1"/>
    <property type="match status" value="1"/>
</dbReference>
<dbReference type="PANTHER" id="PTHR21085">
    <property type="entry name" value="CHORISMATE SYNTHASE"/>
    <property type="match status" value="1"/>
</dbReference>
<dbReference type="PANTHER" id="PTHR21085:SF0">
    <property type="entry name" value="CHORISMATE SYNTHASE"/>
    <property type="match status" value="1"/>
</dbReference>
<dbReference type="Pfam" id="PF01264">
    <property type="entry name" value="Chorismate_synt"/>
    <property type="match status" value="1"/>
</dbReference>
<dbReference type="PIRSF" id="PIRSF001456">
    <property type="entry name" value="Chorismate_synth"/>
    <property type="match status" value="1"/>
</dbReference>
<dbReference type="SUPFAM" id="SSF103263">
    <property type="entry name" value="Chorismate synthase, AroC"/>
    <property type="match status" value="1"/>
</dbReference>
<dbReference type="PROSITE" id="PS00787">
    <property type="entry name" value="CHORISMATE_SYNTHASE_1"/>
    <property type="match status" value="1"/>
</dbReference>
<dbReference type="PROSITE" id="PS00788">
    <property type="entry name" value="CHORISMATE_SYNTHASE_2"/>
    <property type="match status" value="1"/>
</dbReference>
<dbReference type="PROSITE" id="PS00789">
    <property type="entry name" value="CHORISMATE_SYNTHASE_3"/>
    <property type="match status" value="1"/>
</dbReference>
<reference key="1">
    <citation type="submission" date="2005-08" db="EMBL/GenBank/DDBJ databases">
        <title>Complete sequence of Synechococcus sp. CC9902.</title>
        <authorList>
            <person name="Copeland A."/>
            <person name="Lucas S."/>
            <person name="Lapidus A."/>
            <person name="Barry K."/>
            <person name="Detter J.C."/>
            <person name="Glavina T."/>
            <person name="Hammon N."/>
            <person name="Israni S."/>
            <person name="Pitluck S."/>
            <person name="Martinez M."/>
            <person name="Schmutz J."/>
            <person name="Larimer F."/>
            <person name="Land M."/>
            <person name="Kyrpides N."/>
            <person name="Ivanova N."/>
            <person name="Richardson P."/>
        </authorList>
    </citation>
    <scope>NUCLEOTIDE SEQUENCE [LARGE SCALE GENOMIC DNA]</scope>
    <source>
        <strain>CC9902</strain>
    </source>
</reference>
<name>AROC_SYNS9</name>
<proteinExistence type="inferred from homology"/>
<feature type="chain" id="PRO_0000256354" description="Chorismate synthase">
    <location>
        <begin position="1"/>
        <end position="364"/>
    </location>
</feature>
<feature type="binding site" evidence="1">
    <location>
        <position position="47"/>
    </location>
    <ligand>
        <name>NADP(+)</name>
        <dbReference type="ChEBI" id="CHEBI:58349"/>
    </ligand>
</feature>
<feature type="binding site" evidence="1">
    <location>
        <begin position="125"/>
        <end position="127"/>
    </location>
    <ligand>
        <name>FMN</name>
        <dbReference type="ChEBI" id="CHEBI:58210"/>
    </ligand>
</feature>
<feature type="binding site" evidence="1">
    <location>
        <position position="288"/>
    </location>
    <ligand>
        <name>FMN</name>
        <dbReference type="ChEBI" id="CHEBI:58210"/>
    </ligand>
</feature>
<feature type="binding site" evidence="1">
    <location>
        <begin position="303"/>
        <end position="307"/>
    </location>
    <ligand>
        <name>FMN</name>
        <dbReference type="ChEBI" id="CHEBI:58210"/>
    </ligand>
</feature>
<feature type="binding site" evidence="1">
    <location>
        <position position="329"/>
    </location>
    <ligand>
        <name>FMN</name>
        <dbReference type="ChEBI" id="CHEBI:58210"/>
    </ligand>
</feature>